<name>GSA_MYCS2</name>
<evidence type="ECO:0000255" key="1">
    <source>
        <dbReference type="HAMAP-Rule" id="MF_00375"/>
    </source>
</evidence>
<evidence type="ECO:0000305" key="2"/>
<feature type="chain" id="PRO_0000382346" description="Glutamate-1-semialdehyde 2,1-aminomutase">
    <location>
        <begin position="1"/>
        <end position="451"/>
    </location>
</feature>
<feature type="modified residue" description="N6-(pyridoxal phosphate)lysine" evidence="1">
    <location>
        <position position="283"/>
    </location>
</feature>
<dbReference type="EC" id="5.4.3.8" evidence="1"/>
<dbReference type="EMBL" id="CP000480">
    <property type="protein sequence ID" value="ABK75419.1"/>
    <property type="molecule type" value="Genomic_DNA"/>
</dbReference>
<dbReference type="EMBL" id="CP001663">
    <property type="protein sequence ID" value="AFP37423.1"/>
    <property type="status" value="ALT_INIT"/>
    <property type="molecule type" value="Genomic_DNA"/>
</dbReference>
<dbReference type="RefSeq" id="YP_885371.1">
    <property type="nucleotide sequence ID" value="NC_008596.1"/>
</dbReference>
<dbReference type="SMR" id="A0QR33"/>
<dbReference type="STRING" id="246196.MSMEG_0969"/>
<dbReference type="PaxDb" id="246196-MSMEI_0943"/>
<dbReference type="KEGG" id="msg:MSMEI_0943"/>
<dbReference type="KEGG" id="msm:MSMEG_0969"/>
<dbReference type="PATRIC" id="fig|246196.19.peg.957"/>
<dbReference type="eggNOG" id="COG0001">
    <property type="taxonomic scope" value="Bacteria"/>
</dbReference>
<dbReference type="OrthoDB" id="9801052at2"/>
<dbReference type="UniPathway" id="UPA00251">
    <property type="reaction ID" value="UER00317"/>
</dbReference>
<dbReference type="Proteomes" id="UP000000757">
    <property type="component" value="Chromosome"/>
</dbReference>
<dbReference type="Proteomes" id="UP000006158">
    <property type="component" value="Chromosome"/>
</dbReference>
<dbReference type="GO" id="GO:0005737">
    <property type="term" value="C:cytoplasm"/>
    <property type="evidence" value="ECO:0007669"/>
    <property type="project" value="UniProtKB-SubCell"/>
</dbReference>
<dbReference type="GO" id="GO:0042286">
    <property type="term" value="F:glutamate-1-semialdehyde 2,1-aminomutase activity"/>
    <property type="evidence" value="ECO:0007669"/>
    <property type="project" value="UniProtKB-UniRule"/>
</dbReference>
<dbReference type="GO" id="GO:0030170">
    <property type="term" value="F:pyridoxal phosphate binding"/>
    <property type="evidence" value="ECO:0007669"/>
    <property type="project" value="InterPro"/>
</dbReference>
<dbReference type="GO" id="GO:0008483">
    <property type="term" value="F:transaminase activity"/>
    <property type="evidence" value="ECO:0007669"/>
    <property type="project" value="InterPro"/>
</dbReference>
<dbReference type="GO" id="GO:0006782">
    <property type="term" value="P:protoporphyrinogen IX biosynthetic process"/>
    <property type="evidence" value="ECO:0007669"/>
    <property type="project" value="UniProtKB-UniRule"/>
</dbReference>
<dbReference type="CDD" id="cd00610">
    <property type="entry name" value="OAT_like"/>
    <property type="match status" value="1"/>
</dbReference>
<dbReference type="FunFam" id="3.40.640.10:FF:000021">
    <property type="entry name" value="Glutamate-1-semialdehyde 2,1-aminomutase"/>
    <property type="match status" value="1"/>
</dbReference>
<dbReference type="Gene3D" id="3.90.1150.10">
    <property type="entry name" value="Aspartate Aminotransferase, domain 1"/>
    <property type="match status" value="1"/>
</dbReference>
<dbReference type="Gene3D" id="3.40.640.10">
    <property type="entry name" value="Type I PLP-dependent aspartate aminotransferase-like (Major domain)"/>
    <property type="match status" value="1"/>
</dbReference>
<dbReference type="HAMAP" id="MF_00375">
    <property type="entry name" value="HemL_aminotrans_3"/>
    <property type="match status" value="1"/>
</dbReference>
<dbReference type="InterPro" id="IPR004639">
    <property type="entry name" value="4pyrrol_synth_GluAld_NH2Trfase"/>
</dbReference>
<dbReference type="InterPro" id="IPR005814">
    <property type="entry name" value="Aminotrans_3"/>
</dbReference>
<dbReference type="InterPro" id="IPR049704">
    <property type="entry name" value="Aminotrans_3_PPA_site"/>
</dbReference>
<dbReference type="InterPro" id="IPR015424">
    <property type="entry name" value="PyrdxlP-dep_Trfase"/>
</dbReference>
<dbReference type="InterPro" id="IPR015421">
    <property type="entry name" value="PyrdxlP-dep_Trfase_major"/>
</dbReference>
<dbReference type="InterPro" id="IPR015422">
    <property type="entry name" value="PyrdxlP-dep_Trfase_small"/>
</dbReference>
<dbReference type="NCBIfam" id="TIGR00713">
    <property type="entry name" value="hemL"/>
    <property type="match status" value="1"/>
</dbReference>
<dbReference type="NCBIfam" id="NF000818">
    <property type="entry name" value="PRK00062.1"/>
    <property type="match status" value="1"/>
</dbReference>
<dbReference type="PANTHER" id="PTHR43713">
    <property type="entry name" value="GLUTAMATE-1-SEMIALDEHYDE 2,1-AMINOMUTASE"/>
    <property type="match status" value="1"/>
</dbReference>
<dbReference type="PANTHER" id="PTHR43713:SF3">
    <property type="entry name" value="GLUTAMATE-1-SEMIALDEHYDE 2,1-AMINOMUTASE 1, CHLOROPLASTIC-RELATED"/>
    <property type="match status" value="1"/>
</dbReference>
<dbReference type="Pfam" id="PF00202">
    <property type="entry name" value="Aminotran_3"/>
    <property type="match status" value="1"/>
</dbReference>
<dbReference type="SUPFAM" id="SSF53383">
    <property type="entry name" value="PLP-dependent transferases"/>
    <property type="match status" value="1"/>
</dbReference>
<dbReference type="PROSITE" id="PS00600">
    <property type="entry name" value="AA_TRANSFER_CLASS_3"/>
    <property type="match status" value="1"/>
</dbReference>
<proteinExistence type="inferred from homology"/>
<protein>
    <recommendedName>
        <fullName evidence="1">Glutamate-1-semialdehyde 2,1-aminomutase</fullName>
        <shortName evidence="1">GSA</shortName>
        <ecNumber evidence="1">5.4.3.8</ecNumber>
    </recommendedName>
    <alternativeName>
        <fullName evidence="1">Glutamate-1-semialdehyde aminotransferase</fullName>
        <shortName evidence="1">GSA-AT</shortName>
    </alternativeName>
</protein>
<sequence length="451" mass="46772">MAMRVDQTCGSEEHSPASTQRSAQLFADACAVIPGGVNSPVRAFNSVGGTPRFITSAGGYWLTDADGNRYIDLVCSWGPMLLGHAHPAVVEAVRKVAEHGLSFGAPTPSETELAAEIIDRVAPVEMMRFVNSGTEATMSAIRLARGFTGRAKIVKFSGCYHGHSDALLADAGSGVATLGLPSSPGVTGAAAADTIVIPYNNVAAVEDVFAHFGDEIACVISEASPGNMGTVPPLPGFNAALRRITAEHGALLILDEVMTGFRVSRSGWYGLDPVEADLLTFGKVMSGGLPAAAFGGRTEVMSRLAPLGPVYQAGTLSGNPVAMAAGLTTLRHADDAVYAKLDANADRLAGLLTGALTEAGVAHQVQRAGNMLSVFFTDAPVHDFAAAKATETWRFPPFFHALLERGVYPPCSAFETWFVSAALDDDAFARIAEALPAAARAAAAATPEGTA</sequence>
<keyword id="KW-0963">Cytoplasm</keyword>
<keyword id="KW-0413">Isomerase</keyword>
<keyword id="KW-0627">Porphyrin biosynthesis</keyword>
<keyword id="KW-0663">Pyridoxal phosphate</keyword>
<keyword id="KW-1185">Reference proteome</keyword>
<comment type="catalytic activity">
    <reaction evidence="1">
        <text>(S)-4-amino-5-oxopentanoate = 5-aminolevulinate</text>
        <dbReference type="Rhea" id="RHEA:14265"/>
        <dbReference type="ChEBI" id="CHEBI:57501"/>
        <dbReference type="ChEBI" id="CHEBI:356416"/>
        <dbReference type="EC" id="5.4.3.8"/>
    </reaction>
</comment>
<comment type="cofactor">
    <cofactor evidence="1">
        <name>pyridoxal 5'-phosphate</name>
        <dbReference type="ChEBI" id="CHEBI:597326"/>
    </cofactor>
</comment>
<comment type="pathway">
    <text evidence="1">Porphyrin-containing compound metabolism; protoporphyrin-IX biosynthesis; 5-aminolevulinate from L-glutamyl-tRNA(Glu): step 2/2.</text>
</comment>
<comment type="subunit">
    <text evidence="1">Homodimer.</text>
</comment>
<comment type="subcellular location">
    <subcellularLocation>
        <location evidence="1">Cytoplasm</location>
    </subcellularLocation>
</comment>
<comment type="similarity">
    <text evidence="1">Belongs to the class-III pyridoxal-phosphate-dependent aminotransferase family. HemL subfamily.</text>
</comment>
<comment type="sequence caution" evidence="2">
    <conflict type="erroneous initiation">
        <sequence resource="EMBL-CDS" id="AFP37423"/>
    </conflict>
    <text>Truncated N-terminus.</text>
</comment>
<organism>
    <name type="scientific">Mycolicibacterium smegmatis (strain ATCC 700084 / mc(2)155)</name>
    <name type="common">Mycobacterium smegmatis</name>
    <dbReference type="NCBI Taxonomy" id="246196"/>
    <lineage>
        <taxon>Bacteria</taxon>
        <taxon>Bacillati</taxon>
        <taxon>Actinomycetota</taxon>
        <taxon>Actinomycetes</taxon>
        <taxon>Mycobacteriales</taxon>
        <taxon>Mycobacteriaceae</taxon>
        <taxon>Mycolicibacterium</taxon>
    </lineage>
</organism>
<reference key="1">
    <citation type="submission" date="2006-10" db="EMBL/GenBank/DDBJ databases">
        <authorList>
            <person name="Fleischmann R.D."/>
            <person name="Dodson R.J."/>
            <person name="Haft D.H."/>
            <person name="Merkel J.S."/>
            <person name="Nelson W.C."/>
            <person name="Fraser C.M."/>
        </authorList>
    </citation>
    <scope>NUCLEOTIDE SEQUENCE [LARGE SCALE GENOMIC DNA]</scope>
    <source>
        <strain>ATCC 700084 / mc(2)155</strain>
    </source>
</reference>
<reference key="2">
    <citation type="journal article" date="2007" name="Genome Biol.">
        <title>Interrupted coding sequences in Mycobacterium smegmatis: authentic mutations or sequencing errors?</title>
        <authorList>
            <person name="Deshayes C."/>
            <person name="Perrodou E."/>
            <person name="Gallien S."/>
            <person name="Euphrasie D."/>
            <person name="Schaeffer C."/>
            <person name="Van-Dorsselaer A."/>
            <person name="Poch O."/>
            <person name="Lecompte O."/>
            <person name="Reyrat J.-M."/>
        </authorList>
    </citation>
    <scope>NUCLEOTIDE SEQUENCE [LARGE SCALE GENOMIC DNA]</scope>
    <source>
        <strain>ATCC 700084 / mc(2)155</strain>
    </source>
</reference>
<reference key="3">
    <citation type="journal article" date="2009" name="Genome Res.">
        <title>Ortho-proteogenomics: multiple proteomes investigation through orthology and a new MS-based protocol.</title>
        <authorList>
            <person name="Gallien S."/>
            <person name="Perrodou E."/>
            <person name="Carapito C."/>
            <person name="Deshayes C."/>
            <person name="Reyrat J.-M."/>
            <person name="Van Dorsselaer A."/>
            <person name="Poch O."/>
            <person name="Schaeffer C."/>
            <person name="Lecompte O."/>
        </authorList>
    </citation>
    <scope>NUCLEOTIDE SEQUENCE [LARGE SCALE GENOMIC DNA]</scope>
    <source>
        <strain>ATCC 700084 / mc(2)155</strain>
    </source>
</reference>
<gene>
    <name evidence="1" type="primary">hemL</name>
    <name type="ordered locus">MSMEG_0969</name>
    <name type="ordered locus">MSMEI_0943</name>
</gene>
<accession>A0QR33</accession>
<accession>I7FEZ3</accession>